<proteinExistence type="inferred from homology"/>
<reference key="1">
    <citation type="journal article" date="2008" name="BMC Genomics">
        <title>The genome sequence of the fish pathogen Aliivibrio salmonicida strain LFI1238 shows extensive evidence of gene decay.</title>
        <authorList>
            <person name="Hjerde E."/>
            <person name="Lorentzen M.S."/>
            <person name="Holden M.T."/>
            <person name="Seeger K."/>
            <person name="Paulsen S."/>
            <person name="Bason N."/>
            <person name="Churcher C."/>
            <person name="Harris D."/>
            <person name="Norbertczak H."/>
            <person name="Quail M.A."/>
            <person name="Sanders S."/>
            <person name="Thurston S."/>
            <person name="Parkhill J."/>
            <person name="Willassen N.P."/>
            <person name="Thomson N.R."/>
        </authorList>
    </citation>
    <scope>NUCLEOTIDE SEQUENCE [LARGE SCALE GENOMIC DNA]</scope>
    <source>
        <strain>LFI1238</strain>
    </source>
</reference>
<gene>
    <name evidence="1" type="primary">zipA</name>
    <name type="ordered locus">VSAL_I2354</name>
</gene>
<comment type="function">
    <text evidence="1">Essential cell division protein that stabilizes the FtsZ protofilaments by cross-linking them and that serves as a cytoplasmic membrane anchor for the Z ring. Also required for the recruitment to the septal ring of downstream cell division proteins.</text>
</comment>
<comment type="subunit">
    <text evidence="1">Interacts with FtsZ via their C-terminal domains.</text>
</comment>
<comment type="subcellular location">
    <subcellularLocation>
        <location evidence="1">Cell inner membrane</location>
        <topology evidence="1">Single-pass type I membrane protein</topology>
    </subcellularLocation>
    <text evidence="1">Localizes to the Z ring in an FtsZ-dependent manner.</text>
</comment>
<comment type="similarity">
    <text evidence="1">Belongs to the ZipA family.</text>
</comment>
<keyword id="KW-0131">Cell cycle</keyword>
<keyword id="KW-0132">Cell division</keyword>
<keyword id="KW-0997">Cell inner membrane</keyword>
<keyword id="KW-1003">Cell membrane</keyword>
<keyword id="KW-0472">Membrane</keyword>
<keyword id="KW-0812">Transmembrane</keyword>
<keyword id="KW-1133">Transmembrane helix</keyword>
<accession>B6EJQ7</accession>
<name>ZIPA_ALISL</name>
<feature type="chain" id="PRO_1000127214" description="Cell division protein ZipA">
    <location>
        <begin position="1"/>
        <end position="308"/>
    </location>
</feature>
<feature type="topological domain" description="Periplasmic" evidence="1">
    <location>
        <begin position="1"/>
        <end position="5"/>
    </location>
</feature>
<feature type="transmembrane region" description="Helical" evidence="1">
    <location>
        <begin position="6"/>
        <end position="26"/>
    </location>
</feature>
<feature type="topological domain" description="Cytoplasmic" evidence="1">
    <location>
        <begin position="27"/>
        <end position="308"/>
    </location>
</feature>
<feature type="region of interest" description="Disordered" evidence="2">
    <location>
        <begin position="43"/>
        <end position="90"/>
    </location>
</feature>
<feature type="compositionally biased region" description="Basic and acidic residues" evidence="2">
    <location>
        <begin position="59"/>
        <end position="82"/>
    </location>
</feature>
<organism>
    <name type="scientific">Aliivibrio salmonicida (strain LFI1238)</name>
    <name type="common">Vibrio salmonicida (strain LFI1238)</name>
    <dbReference type="NCBI Taxonomy" id="316275"/>
    <lineage>
        <taxon>Bacteria</taxon>
        <taxon>Pseudomonadati</taxon>
        <taxon>Pseudomonadota</taxon>
        <taxon>Gammaproteobacteria</taxon>
        <taxon>Vibrionales</taxon>
        <taxon>Vibrionaceae</taxon>
        <taxon>Aliivibrio</taxon>
    </lineage>
</organism>
<sequence>MQELRLVLILVGALAIAALLFHGLWTSRKETSSKFGKKVDIDFDSESEDEQPTPARGFEQPKESVVDVRQERKEPAFGRDEPNLSQDPLFDGGTDAILKQNAEEKEVEPKVIEEPIMTRPSISESMVKEEPTISFSAIDDVEPTFHKESSVVPAPVEPVIIPEIEPEVVPEPEEDVIVINVHGMGNERFNGNRLFNSLEQNGLIFGDMAIYHRHSDLAGSGKVVFSTANMVAPGHFQVPEGEEFSTPGISFFLPLPCNGEADYNFKLMLQTAQLVASELGGNVLDEKRNMLTPNKIDEYKQRVKVFCN</sequence>
<protein>
    <recommendedName>
        <fullName evidence="1">Cell division protein ZipA</fullName>
    </recommendedName>
</protein>
<dbReference type="EMBL" id="FM178379">
    <property type="protein sequence ID" value="CAQ80038.1"/>
    <property type="molecule type" value="Genomic_DNA"/>
</dbReference>
<dbReference type="RefSeq" id="WP_012550849.1">
    <property type="nucleotide sequence ID" value="NC_011312.1"/>
</dbReference>
<dbReference type="SMR" id="B6EJQ7"/>
<dbReference type="KEGG" id="vsa:VSAL_I2354"/>
<dbReference type="eggNOG" id="COG3115">
    <property type="taxonomic scope" value="Bacteria"/>
</dbReference>
<dbReference type="HOGENOM" id="CLU_030174_1_0_6"/>
<dbReference type="Proteomes" id="UP000001730">
    <property type="component" value="Chromosome 1"/>
</dbReference>
<dbReference type="GO" id="GO:0032153">
    <property type="term" value="C:cell division site"/>
    <property type="evidence" value="ECO:0007669"/>
    <property type="project" value="UniProtKB-UniRule"/>
</dbReference>
<dbReference type="GO" id="GO:0005886">
    <property type="term" value="C:plasma membrane"/>
    <property type="evidence" value="ECO:0007669"/>
    <property type="project" value="UniProtKB-SubCell"/>
</dbReference>
<dbReference type="GO" id="GO:0000917">
    <property type="term" value="P:division septum assembly"/>
    <property type="evidence" value="ECO:0007669"/>
    <property type="project" value="TreeGrafter"/>
</dbReference>
<dbReference type="GO" id="GO:0043093">
    <property type="term" value="P:FtsZ-dependent cytokinesis"/>
    <property type="evidence" value="ECO:0007669"/>
    <property type="project" value="UniProtKB-UniRule"/>
</dbReference>
<dbReference type="Gene3D" id="3.30.1400.10">
    <property type="entry name" value="ZipA, C-terminal FtsZ-binding domain"/>
    <property type="match status" value="1"/>
</dbReference>
<dbReference type="HAMAP" id="MF_00509">
    <property type="entry name" value="ZipA"/>
    <property type="match status" value="1"/>
</dbReference>
<dbReference type="InterPro" id="IPR011919">
    <property type="entry name" value="Cell_div_ZipA"/>
</dbReference>
<dbReference type="InterPro" id="IPR007449">
    <property type="entry name" value="ZipA_FtsZ-bd_C"/>
</dbReference>
<dbReference type="InterPro" id="IPR036765">
    <property type="entry name" value="ZipA_FtsZ-bd_C_sf"/>
</dbReference>
<dbReference type="NCBIfam" id="TIGR02205">
    <property type="entry name" value="septum_zipA"/>
    <property type="match status" value="1"/>
</dbReference>
<dbReference type="PANTHER" id="PTHR38685">
    <property type="entry name" value="CELL DIVISION PROTEIN ZIPA"/>
    <property type="match status" value="1"/>
</dbReference>
<dbReference type="PANTHER" id="PTHR38685:SF1">
    <property type="entry name" value="CELL DIVISION PROTEIN ZIPA"/>
    <property type="match status" value="1"/>
</dbReference>
<dbReference type="Pfam" id="PF04354">
    <property type="entry name" value="ZipA_C"/>
    <property type="match status" value="1"/>
</dbReference>
<dbReference type="SMART" id="SM00771">
    <property type="entry name" value="ZipA_C"/>
    <property type="match status" value="1"/>
</dbReference>
<dbReference type="SUPFAM" id="SSF64383">
    <property type="entry name" value="Cell-division protein ZipA, C-terminal domain"/>
    <property type="match status" value="1"/>
</dbReference>
<evidence type="ECO:0000255" key="1">
    <source>
        <dbReference type="HAMAP-Rule" id="MF_00509"/>
    </source>
</evidence>
<evidence type="ECO:0000256" key="2">
    <source>
        <dbReference type="SAM" id="MobiDB-lite"/>
    </source>
</evidence>